<gene>
    <name evidence="1" type="primary">pdxS</name>
    <name type="ordered locus">SPH_1584</name>
</gene>
<feature type="chain" id="PRO_1000188242" description="Pyridoxal 5'-phosphate synthase subunit PdxS">
    <location>
        <begin position="1"/>
        <end position="291"/>
    </location>
</feature>
<feature type="active site" description="Schiff-base intermediate with D-ribose 5-phosphate" evidence="1">
    <location>
        <position position="80"/>
    </location>
</feature>
<feature type="binding site" evidence="1">
    <location>
        <position position="23"/>
    </location>
    <ligand>
        <name>D-ribose 5-phosphate</name>
        <dbReference type="ChEBI" id="CHEBI:78346"/>
    </ligand>
</feature>
<feature type="binding site" evidence="1">
    <location>
        <position position="152"/>
    </location>
    <ligand>
        <name>D-ribose 5-phosphate</name>
        <dbReference type="ChEBI" id="CHEBI:78346"/>
    </ligand>
</feature>
<feature type="binding site" evidence="1">
    <location>
        <position position="164"/>
    </location>
    <ligand>
        <name>D-glyceraldehyde 3-phosphate</name>
        <dbReference type="ChEBI" id="CHEBI:59776"/>
    </ligand>
</feature>
<feature type="binding site" evidence="1">
    <location>
        <position position="213"/>
    </location>
    <ligand>
        <name>D-ribose 5-phosphate</name>
        <dbReference type="ChEBI" id="CHEBI:78346"/>
    </ligand>
</feature>
<feature type="binding site" evidence="1">
    <location>
        <begin position="234"/>
        <end position="235"/>
    </location>
    <ligand>
        <name>D-ribose 5-phosphate</name>
        <dbReference type="ChEBI" id="CHEBI:78346"/>
    </ligand>
</feature>
<comment type="function">
    <text evidence="1">Catalyzes the formation of pyridoxal 5'-phosphate from ribose 5-phosphate (RBP), glyceraldehyde 3-phosphate (G3P) and ammonia. The ammonia is provided by the PdxT subunit. Can also use ribulose 5-phosphate and dihydroxyacetone phosphate as substrates, resulting from enzyme-catalyzed isomerization of RBP and G3P, respectively.</text>
</comment>
<comment type="catalytic activity">
    <reaction evidence="1">
        <text>aldehydo-D-ribose 5-phosphate + D-glyceraldehyde 3-phosphate + L-glutamine = pyridoxal 5'-phosphate + L-glutamate + phosphate + 3 H2O + H(+)</text>
        <dbReference type="Rhea" id="RHEA:31507"/>
        <dbReference type="ChEBI" id="CHEBI:15377"/>
        <dbReference type="ChEBI" id="CHEBI:15378"/>
        <dbReference type="ChEBI" id="CHEBI:29985"/>
        <dbReference type="ChEBI" id="CHEBI:43474"/>
        <dbReference type="ChEBI" id="CHEBI:58273"/>
        <dbReference type="ChEBI" id="CHEBI:58359"/>
        <dbReference type="ChEBI" id="CHEBI:59776"/>
        <dbReference type="ChEBI" id="CHEBI:597326"/>
        <dbReference type="EC" id="4.3.3.6"/>
    </reaction>
</comment>
<comment type="pathway">
    <text evidence="1">Cofactor biosynthesis; pyridoxal 5'-phosphate biosynthesis.</text>
</comment>
<comment type="subunit">
    <text evidence="1">In the presence of PdxT, forms a dodecamer of heterodimers.</text>
</comment>
<comment type="similarity">
    <text evidence="1">Belongs to the PdxS/SNZ family.</text>
</comment>
<dbReference type="EC" id="4.3.3.6" evidence="1"/>
<dbReference type="EMBL" id="CP000936">
    <property type="protein sequence ID" value="ACA35715.1"/>
    <property type="molecule type" value="Genomic_DNA"/>
</dbReference>
<dbReference type="RefSeq" id="WP_000138517.1">
    <property type="nucleotide sequence ID" value="NC_010380.1"/>
</dbReference>
<dbReference type="SMR" id="B1ICP9"/>
<dbReference type="GeneID" id="45653282"/>
<dbReference type="KEGG" id="spv:SPH_1584"/>
<dbReference type="HOGENOM" id="CLU_055352_1_0_9"/>
<dbReference type="UniPathway" id="UPA00245"/>
<dbReference type="Proteomes" id="UP000002163">
    <property type="component" value="Chromosome"/>
</dbReference>
<dbReference type="GO" id="GO:0036381">
    <property type="term" value="F:pyridoxal 5'-phosphate synthase (glutamine hydrolysing) activity"/>
    <property type="evidence" value="ECO:0007669"/>
    <property type="project" value="UniProtKB-UniRule"/>
</dbReference>
<dbReference type="GO" id="GO:0006520">
    <property type="term" value="P:amino acid metabolic process"/>
    <property type="evidence" value="ECO:0007669"/>
    <property type="project" value="TreeGrafter"/>
</dbReference>
<dbReference type="GO" id="GO:0042823">
    <property type="term" value="P:pyridoxal phosphate biosynthetic process"/>
    <property type="evidence" value="ECO:0007669"/>
    <property type="project" value="UniProtKB-UniRule"/>
</dbReference>
<dbReference type="GO" id="GO:0008615">
    <property type="term" value="P:pyridoxine biosynthetic process"/>
    <property type="evidence" value="ECO:0007669"/>
    <property type="project" value="TreeGrafter"/>
</dbReference>
<dbReference type="CDD" id="cd04727">
    <property type="entry name" value="pdxS"/>
    <property type="match status" value="1"/>
</dbReference>
<dbReference type="FunFam" id="3.20.20.70:FF:000001">
    <property type="entry name" value="Pyridoxine biosynthesis protein PDX1"/>
    <property type="match status" value="1"/>
</dbReference>
<dbReference type="Gene3D" id="3.20.20.70">
    <property type="entry name" value="Aldolase class I"/>
    <property type="match status" value="1"/>
</dbReference>
<dbReference type="HAMAP" id="MF_01824">
    <property type="entry name" value="PdxS"/>
    <property type="match status" value="1"/>
</dbReference>
<dbReference type="InterPro" id="IPR013785">
    <property type="entry name" value="Aldolase_TIM"/>
</dbReference>
<dbReference type="InterPro" id="IPR001852">
    <property type="entry name" value="PdxS/SNZ"/>
</dbReference>
<dbReference type="InterPro" id="IPR033755">
    <property type="entry name" value="PdxS/SNZ_N"/>
</dbReference>
<dbReference type="InterPro" id="IPR011060">
    <property type="entry name" value="RibuloseP-bd_barrel"/>
</dbReference>
<dbReference type="NCBIfam" id="NF003215">
    <property type="entry name" value="PRK04180.1"/>
    <property type="match status" value="1"/>
</dbReference>
<dbReference type="NCBIfam" id="TIGR00343">
    <property type="entry name" value="pyridoxal 5'-phosphate synthase lyase subunit PdxS"/>
    <property type="match status" value="1"/>
</dbReference>
<dbReference type="PANTHER" id="PTHR31829">
    <property type="entry name" value="PYRIDOXAL 5'-PHOSPHATE SYNTHASE SUBUNIT SNZ1-RELATED"/>
    <property type="match status" value="1"/>
</dbReference>
<dbReference type="PANTHER" id="PTHR31829:SF0">
    <property type="entry name" value="PYRIDOXAL 5'-PHOSPHATE SYNTHASE SUBUNIT SNZ1-RELATED"/>
    <property type="match status" value="1"/>
</dbReference>
<dbReference type="Pfam" id="PF01680">
    <property type="entry name" value="SOR_SNZ"/>
    <property type="match status" value="1"/>
</dbReference>
<dbReference type="PIRSF" id="PIRSF029271">
    <property type="entry name" value="Pdx1"/>
    <property type="match status" value="1"/>
</dbReference>
<dbReference type="SUPFAM" id="SSF51366">
    <property type="entry name" value="Ribulose-phoshate binding barrel"/>
    <property type="match status" value="1"/>
</dbReference>
<dbReference type="PROSITE" id="PS01235">
    <property type="entry name" value="PDXS_SNZ_1"/>
    <property type="match status" value="1"/>
</dbReference>
<dbReference type="PROSITE" id="PS51129">
    <property type="entry name" value="PDXS_SNZ_2"/>
    <property type="match status" value="1"/>
</dbReference>
<keyword id="KW-0456">Lyase</keyword>
<keyword id="KW-0663">Pyridoxal phosphate</keyword>
<keyword id="KW-0704">Schiff base</keyword>
<proteinExistence type="inferred from homology"/>
<accession>B1ICP9</accession>
<protein>
    <recommendedName>
        <fullName evidence="1">Pyridoxal 5'-phosphate synthase subunit PdxS</fullName>
        <shortName evidence="1">PLP synthase subunit PdxS</shortName>
        <ecNumber evidence="1">4.3.3.6</ecNumber>
    </recommendedName>
    <alternativeName>
        <fullName evidence="1">Pdx1</fullName>
    </alternativeName>
</protein>
<name>PDXS_STRPI</name>
<evidence type="ECO:0000255" key="1">
    <source>
        <dbReference type="HAMAP-Rule" id="MF_01824"/>
    </source>
</evidence>
<organism>
    <name type="scientific">Streptococcus pneumoniae (strain Hungary19A-6)</name>
    <dbReference type="NCBI Taxonomy" id="487214"/>
    <lineage>
        <taxon>Bacteria</taxon>
        <taxon>Bacillati</taxon>
        <taxon>Bacillota</taxon>
        <taxon>Bacilli</taxon>
        <taxon>Lactobacillales</taxon>
        <taxon>Streptococcaceae</taxon>
        <taxon>Streptococcus</taxon>
    </lineage>
</organism>
<reference key="1">
    <citation type="journal article" date="2010" name="Genome Biol.">
        <title>Structure and dynamics of the pan-genome of Streptococcus pneumoniae and closely related species.</title>
        <authorList>
            <person name="Donati C."/>
            <person name="Hiller N.L."/>
            <person name="Tettelin H."/>
            <person name="Muzzi A."/>
            <person name="Croucher N.J."/>
            <person name="Angiuoli S.V."/>
            <person name="Oggioni M."/>
            <person name="Dunning Hotopp J.C."/>
            <person name="Hu F.Z."/>
            <person name="Riley D.R."/>
            <person name="Covacci A."/>
            <person name="Mitchell T.J."/>
            <person name="Bentley S.D."/>
            <person name="Kilian M."/>
            <person name="Ehrlich G.D."/>
            <person name="Rappuoli R."/>
            <person name="Moxon E.R."/>
            <person name="Masignani V."/>
        </authorList>
    </citation>
    <scope>NUCLEOTIDE SEQUENCE [LARGE SCALE GENOMIC DNA]</scope>
    <source>
        <strain>Hungary19A-6</strain>
    </source>
</reference>
<sequence>MTENRYELNKNLAQMLKGGVIMDVQNPEQARIAEAAGAAAVMALERIPADIRAAGGVSRMSDPKMIKEIQEAVSIPVMAKVRIGHFVEAQILEAIEIDYIDESEVLSPADDRFHVDKKEFQVPFVCGAKDLGEALRRIAEGASMIRTKGEPGTGDIVQAVRHMRMMNQEIRRIQNLREDELYVAAKDLQVPVELVQYVHEHGKLPVVNFAAGGVATPADAALMMQLGAEGVFVGSGIFKSGDPVKRASAIVKAVTNFRNPQILAQISEDLGEAMVGINENEIQILMAERGK</sequence>